<accession>Q62159</accession>
<accession>Q3TUN0</accession>
<keyword id="KW-1003">Cell membrane</keyword>
<keyword id="KW-0342">GTP-binding</keyword>
<keyword id="KW-0449">Lipoprotein</keyword>
<keyword id="KW-0472">Membrane</keyword>
<keyword id="KW-0488">Methylation</keyword>
<keyword id="KW-0547">Nucleotide-binding</keyword>
<keyword id="KW-0636">Prenylation</keyword>
<keyword id="KW-1185">Reference proteome</keyword>
<reference key="1">
    <citation type="journal article" date="1995" name="J. Immunol.">
        <title>Isolation of nine gene sequences induced by silica in murine macrophages.</title>
        <authorList>
            <person name="Segade F."/>
            <person name="Claudio E."/>
            <person name="Wrobel K."/>
            <person name="Ramos S."/>
            <person name="Lazo P.S."/>
        </authorList>
    </citation>
    <scope>NUCLEOTIDE SEQUENCE [MRNA]</scope>
    <scope>INDUCTION</scope>
    <source>
        <tissue>Macrophage</tissue>
    </source>
</reference>
<reference key="2">
    <citation type="journal article" date="2005" name="Science">
        <title>The transcriptional landscape of the mammalian genome.</title>
        <authorList>
            <person name="Carninci P."/>
            <person name="Kasukawa T."/>
            <person name="Katayama S."/>
            <person name="Gough J."/>
            <person name="Frith M.C."/>
            <person name="Maeda N."/>
            <person name="Oyama R."/>
            <person name="Ravasi T."/>
            <person name="Lenhard B."/>
            <person name="Wells C."/>
            <person name="Kodzius R."/>
            <person name="Shimokawa K."/>
            <person name="Bajic V.B."/>
            <person name="Brenner S.E."/>
            <person name="Batalov S."/>
            <person name="Forrest A.R."/>
            <person name="Zavolan M."/>
            <person name="Davis M.J."/>
            <person name="Wilming L.G."/>
            <person name="Aidinis V."/>
            <person name="Allen J.E."/>
            <person name="Ambesi-Impiombato A."/>
            <person name="Apweiler R."/>
            <person name="Aturaliya R.N."/>
            <person name="Bailey T.L."/>
            <person name="Bansal M."/>
            <person name="Baxter L."/>
            <person name="Beisel K.W."/>
            <person name="Bersano T."/>
            <person name="Bono H."/>
            <person name="Chalk A.M."/>
            <person name="Chiu K.P."/>
            <person name="Choudhary V."/>
            <person name="Christoffels A."/>
            <person name="Clutterbuck D.R."/>
            <person name="Crowe M.L."/>
            <person name="Dalla E."/>
            <person name="Dalrymple B.P."/>
            <person name="de Bono B."/>
            <person name="Della Gatta G."/>
            <person name="di Bernardo D."/>
            <person name="Down T."/>
            <person name="Engstrom P."/>
            <person name="Fagiolini M."/>
            <person name="Faulkner G."/>
            <person name="Fletcher C.F."/>
            <person name="Fukushima T."/>
            <person name="Furuno M."/>
            <person name="Futaki S."/>
            <person name="Gariboldi M."/>
            <person name="Georgii-Hemming P."/>
            <person name="Gingeras T.R."/>
            <person name="Gojobori T."/>
            <person name="Green R.E."/>
            <person name="Gustincich S."/>
            <person name="Harbers M."/>
            <person name="Hayashi Y."/>
            <person name="Hensch T.K."/>
            <person name="Hirokawa N."/>
            <person name="Hill D."/>
            <person name="Huminiecki L."/>
            <person name="Iacono M."/>
            <person name="Ikeo K."/>
            <person name="Iwama A."/>
            <person name="Ishikawa T."/>
            <person name="Jakt M."/>
            <person name="Kanapin A."/>
            <person name="Katoh M."/>
            <person name="Kawasawa Y."/>
            <person name="Kelso J."/>
            <person name="Kitamura H."/>
            <person name="Kitano H."/>
            <person name="Kollias G."/>
            <person name="Krishnan S.P."/>
            <person name="Kruger A."/>
            <person name="Kummerfeld S.K."/>
            <person name="Kurochkin I.V."/>
            <person name="Lareau L.F."/>
            <person name="Lazarevic D."/>
            <person name="Lipovich L."/>
            <person name="Liu J."/>
            <person name="Liuni S."/>
            <person name="McWilliam S."/>
            <person name="Madan Babu M."/>
            <person name="Madera M."/>
            <person name="Marchionni L."/>
            <person name="Matsuda H."/>
            <person name="Matsuzawa S."/>
            <person name="Miki H."/>
            <person name="Mignone F."/>
            <person name="Miyake S."/>
            <person name="Morris K."/>
            <person name="Mottagui-Tabar S."/>
            <person name="Mulder N."/>
            <person name="Nakano N."/>
            <person name="Nakauchi H."/>
            <person name="Ng P."/>
            <person name="Nilsson R."/>
            <person name="Nishiguchi S."/>
            <person name="Nishikawa S."/>
            <person name="Nori F."/>
            <person name="Ohara O."/>
            <person name="Okazaki Y."/>
            <person name="Orlando V."/>
            <person name="Pang K.C."/>
            <person name="Pavan W.J."/>
            <person name="Pavesi G."/>
            <person name="Pesole G."/>
            <person name="Petrovsky N."/>
            <person name="Piazza S."/>
            <person name="Reed J."/>
            <person name="Reid J.F."/>
            <person name="Ring B.Z."/>
            <person name="Ringwald M."/>
            <person name="Rost B."/>
            <person name="Ruan Y."/>
            <person name="Salzberg S.L."/>
            <person name="Sandelin A."/>
            <person name="Schneider C."/>
            <person name="Schoenbach C."/>
            <person name="Sekiguchi K."/>
            <person name="Semple C.A."/>
            <person name="Seno S."/>
            <person name="Sessa L."/>
            <person name="Sheng Y."/>
            <person name="Shibata Y."/>
            <person name="Shimada H."/>
            <person name="Shimada K."/>
            <person name="Silva D."/>
            <person name="Sinclair B."/>
            <person name="Sperling S."/>
            <person name="Stupka E."/>
            <person name="Sugiura K."/>
            <person name="Sultana R."/>
            <person name="Takenaka Y."/>
            <person name="Taki K."/>
            <person name="Tammoja K."/>
            <person name="Tan S.L."/>
            <person name="Tang S."/>
            <person name="Taylor M.S."/>
            <person name="Tegner J."/>
            <person name="Teichmann S.A."/>
            <person name="Ueda H.R."/>
            <person name="van Nimwegen E."/>
            <person name="Verardo R."/>
            <person name="Wei C.L."/>
            <person name="Yagi K."/>
            <person name="Yamanishi H."/>
            <person name="Zabarovsky E."/>
            <person name="Zhu S."/>
            <person name="Zimmer A."/>
            <person name="Hide W."/>
            <person name="Bult C."/>
            <person name="Grimmond S.M."/>
            <person name="Teasdale R.D."/>
            <person name="Liu E.T."/>
            <person name="Brusic V."/>
            <person name="Quackenbush J."/>
            <person name="Wahlestedt C."/>
            <person name="Mattick J.S."/>
            <person name="Hume D.A."/>
            <person name="Kai C."/>
            <person name="Sasaki D."/>
            <person name="Tomaru Y."/>
            <person name="Fukuda S."/>
            <person name="Kanamori-Katayama M."/>
            <person name="Suzuki M."/>
            <person name="Aoki J."/>
            <person name="Arakawa T."/>
            <person name="Iida J."/>
            <person name="Imamura K."/>
            <person name="Itoh M."/>
            <person name="Kato T."/>
            <person name="Kawaji H."/>
            <person name="Kawagashira N."/>
            <person name="Kawashima T."/>
            <person name="Kojima M."/>
            <person name="Kondo S."/>
            <person name="Konno H."/>
            <person name="Nakano K."/>
            <person name="Ninomiya N."/>
            <person name="Nishio T."/>
            <person name="Okada M."/>
            <person name="Plessy C."/>
            <person name="Shibata K."/>
            <person name="Shiraki T."/>
            <person name="Suzuki S."/>
            <person name="Tagami M."/>
            <person name="Waki K."/>
            <person name="Watahiki A."/>
            <person name="Okamura-Oho Y."/>
            <person name="Suzuki H."/>
            <person name="Kawai J."/>
            <person name="Hayashizaki Y."/>
        </authorList>
    </citation>
    <scope>NUCLEOTIDE SEQUENCE [LARGE SCALE MRNA]</scope>
    <source>
        <strain>C57BL/6J</strain>
        <tissue>Bone marrow</tissue>
    </source>
</reference>
<reference key="3">
    <citation type="journal article" date="2004" name="Genome Res.">
        <title>The status, quality, and expansion of the NIH full-length cDNA project: the Mammalian Gene Collection (MGC).</title>
        <authorList>
            <consortium name="The MGC Project Team"/>
        </authorList>
    </citation>
    <scope>NUCLEOTIDE SEQUENCE [LARGE SCALE MRNA]</scope>
    <source>
        <strain>FVB/N</strain>
        <tissue>Mammary tumor</tissue>
    </source>
</reference>
<reference key="4">
    <citation type="journal article" date="1996" name="J. Biol. Chem.">
        <title>Rhotekin, a new putative target for Rho bearing homology to a serine/threonine kinase, PKN, and rhophilin in the rho-binding domain.</title>
        <authorList>
            <person name="Reid T."/>
            <person name="Furuyashiki T."/>
            <person name="Ishizaki T."/>
            <person name="Watanabe G."/>
            <person name="Watanabe N."/>
            <person name="Fujisawa K."/>
            <person name="Morii N."/>
            <person name="Madaule P."/>
            <person name="Narumiya S."/>
        </authorList>
    </citation>
    <scope>INTERACTION WITH RTKN</scope>
</reference>
<reference key="5">
    <citation type="journal article" date="2010" name="Cell">
        <title>A tissue-specific atlas of mouse protein phosphorylation and expression.</title>
        <authorList>
            <person name="Huttlin E.L."/>
            <person name="Jedrychowski M.P."/>
            <person name="Elias J.E."/>
            <person name="Goswami T."/>
            <person name="Rad R."/>
            <person name="Beausoleil S.A."/>
            <person name="Villen J."/>
            <person name="Haas W."/>
            <person name="Sowa M.E."/>
            <person name="Gygi S.P."/>
        </authorList>
    </citation>
    <scope>IDENTIFICATION BY MASS SPECTROMETRY [LARGE SCALE ANALYSIS]</scope>
    <source>
        <tissue>Brown adipose tissue</tissue>
        <tissue>Kidney</tissue>
        <tissue>Lung</tissue>
        <tissue>Pancreas</tissue>
        <tissue>Testis</tissue>
    </source>
</reference>
<reference key="6">
    <citation type="journal article" date="2011" name="Mol. Cell. Biol.">
        <title>The Rho target PRK2 regulates apical junction formation in human bronchial epithelial cells.</title>
        <authorList>
            <person name="Wallace S.W."/>
            <person name="Magalhaes A."/>
            <person name="Hall A."/>
        </authorList>
    </citation>
    <scope>FUNCTION</scope>
    <scope>INTERACTION WITH PKN2</scope>
</reference>
<gene>
    <name type="primary">Rhoc</name>
    <name type="synonym">Arhc</name>
</gene>
<proteinExistence type="evidence at protein level"/>
<feature type="chain" id="PRO_0000042024" description="Rho-related GTP-binding protein RhoC">
    <location>
        <begin position="1"/>
        <end position="190"/>
    </location>
</feature>
<feature type="propeptide" id="PRO_0000042025" description="Removed in mature form" evidence="1">
    <location>
        <begin position="191"/>
        <end position="193"/>
    </location>
</feature>
<feature type="short sequence motif" description="Effector region" evidence="3">
    <location>
        <begin position="34"/>
        <end position="42"/>
    </location>
</feature>
<feature type="binding site" evidence="1">
    <location>
        <begin position="12"/>
        <end position="19"/>
    </location>
    <ligand>
        <name>GTP</name>
        <dbReference type="ChEBI" id="CHEBI:37565"/>
    </ligand>
</feature>
<feature type="binding site" evidence="1">
    <location>
        <begin position="59"/>
        <end position="63"/>
    </location>
    <ligand>
        <name>GTP</name>
        <dbReference type="ChEBI" id="CHEBI:37565"/>
    </ligand>
</feature>
<feature type="binding site" evidence="1">
    <location>
        <begin position="117"/>
        <end position="120"/>
    </location>
    <ligand>
        <name>GTP</name>
        <dbReference type="ChEBI" id="CHEBI:37565"/>
    </ligand>
</feature>
<feature type="modified residue" description="Cysteine methyl ester" evidence="1">
    <location>
        <position position="190"/>
    </location>
</feature>
<feature type="lipid moiety-binding region" description="S-geranylgeranyl cysteine" evidence="1">
    <location>
        <position position="190"/>
    </location>
</feature>
<feature type="sequence conflict" description="In Ref. 1; CAA56682." evidence="7" ref="1">
    <original>E</original>
    <variation>Q</variation>
    <location>
        <position position="102"/>
    </location>
</feature>
<protein>
    <recommendedName>
        <fullName>Rho-related GTP-binding protein RhoC</fullName>
    </recommendedName>
    <alternativeName>
        <fullName>Silica-induced gene 61 protein</fullName>
        <shortName>SIG-61</shortName>
    </alternativeName>
</protein>
<comment type="function">
    <text evidence="4">Regulates a signal transduction pathway linking plasma membrane receptors to the assembly of focal adhesions and actin stress fibers. Serves as a microtubule-dependent signal that is required for the myosin contractile ring formation during cell cycle cytokinesis. Regulates apical junction formation in bronchial epithelial cells.</text>
</comment>
<comment type="subunit">
    <text evidence="2 4 6">Interacts with RTKN (PubMed:8662891). Interacts with AKAP13. Interacts with DIAPH1 (By similarity). Interacts with PKN2 (PubMed:20974804). Interacts with ROCK1 and ROCK2. Interacts with ARHGDIA. Interacts with RIPOR1 (By similarity).</text>
</comment>
<comment type="subcellular location">
    <subcellularLocation>
        <location evidence="7">Cell membrane</location>
        <topology evidence="7">Lipid-anchor</topology>
        <orientation evidence="7">Cytoplasmic side</orientation>
    </subcellularLocation>
    <subcellularLocation>
        <location evidence="1">Cleavage furrow</location>
    </subcellularLocation>
    <text evidence="1">Translocates to the equatorial region before furrow formation in a ECT2-dependent manner.</text>
</comment>
<comment type="induction">
    <text evidence="5">Up-regulated in silica-treated macrophages.</text>
</comment>
<comment type="similarity">
    <text evidence="7">Belongs to the small GTPase superfamily. Rho family.</text>
</comment>
<name>RHOC_MOUSE</name>
<dbReference type="EMBL" id="X80638">
    <property type="protein sequence ID" value="CAA56682.1"/>
    <property type="molecule type" value="mRNA"/>
</dbReference>
<dbReference type="EMBL" id="AK011599">
    <property type="protein sequence ID" value="BAB27724.1"/>
    <property type="molecule type" value="mRNA"/>
</dbReference>
<dbReference type="EMBL" id="AK152802">
    <property type="protein sequence ID" value="BAE31507.1"/>
    <property type="molecule type" value="mRNA"/>
</dbReference>
<dbReference type="EMBL" id="AK160650">
    <property type="protein sequence ID" value="BAE35941.1"/>
    <property type="molecule type" value="mRNA"/>
</dbReference>
<dbReference type="EMBL" id="BC004627">
    <property type="protein sequence ID" value="AAH04627.1"/>
    <property type="molecule type" value="mRNA"/>
</dbReference>
<dbReference type="CCDS" id="CCDS17704.1"/>
<dbReference type="RefSeq" id="NP_001278788.1">
    <property type="nucleotide sequence ID" value="NM_001291859.1"/>
</dbReference>
<dbReference type="RefSeq" id="NP_031510.2">
    <property type="nucleotide sequence ID" value="NM_007484.2"/>
</dbReference>
<dbReference type="SMR" id="Q62159"/>
<dbReference type="BioGRID" id="198197">
    <property type="interactions" value="4"/>
</dbReference>
<dbReference type="FunCoup" id="Q62159">
    <property type="interactions" value="2173"/>
</dbReference>
<dbReference type="IntAct" id="Q62159">
    <property type="interactions" value="3"/>
</dbReference>
<dbReference type="MINT" id="Q62159"/>
<dbReference type="STRING" id="10090.ENSMUSP00000002303"/>
<dbReference type="GlyGen" id="Q62159">
    <property type="glycosylation" value="1 site, 1 O-linked glycan (1 site)"/>
</dbReference>
<dbReference type="iPTMnet" id="Q62159"/>
<dbReference type="PhosphoSitePlus" id="Q62159"/>
<dbReference type="SwissPalm" id="Q62159"/>
<dbReference type="jPOST" id="Q62159"/>
<dbReference type="PaxDb" id="10090-ENSMUSP00000002303"/>
<dbReference type="PeptideAtlas" id="Q62159"/>
<dbReference type="ProteomicsDB" id="254877"/>
<dbReference type="Pumba" id="Q62159"/>
<dbReference type="TopDownProteomics" id="Q62159"/>
<dbReference type="DNASU" id="11853"/>
<dbReference type="Ensembl" id="ENSMUST00000002303.12">
    <property type="protein sequence ID" value="ENSMUSP00000002303.6"/>
    <property type="gene ID" value="ENSMUSG00000002233.14"/>
</dbReference>
<dbReference type="Ensembl" id="ENSMUST00000106787.8">
    <property type="protein sequence ID" value="ENSMUSP00000102399.2"/>
    <property type="gene ID" value="ENSMUSG00000002233.14"/>
</dbReference>
<dbReference type="Ensembl" id="ENSMUST00000196817.5">
    <property type="protein sequence ID" value="ENSMUSP00000142697.2"/>
    <property type="gene ID" value="ENSMUSG00000002233.14"/>
</dbReference>
<dbReference type="GeneID" id="11853"/>
<dbReference type="KEGG" id="mmu:11853"/>
<dbReference type="UCSC" id="uc008qul.2">
    <property type="organism name" value="mouse"/>
</dbReference>
<dbReference type="AGR" id="MGI:106028"/>
<dbReference type="CTD" id="389"/>
<dbReference type="MGI" id="MGI:106028">
    <property type="gene designation" value="Rhoc"/>
</dbReference>
<dbReference type="VEuPathDB" id="HostDB:ENSMUSG00000002233"/>
<dbReference type="eggNOG" id="KOG0393">
    <property type="taxonomic scope" value="Eukaryota"/>
</dbReference>
<dbReference type="GeneTree" id="ENSGT00950000182945"/>
<dbReference type="InParanoid" id="Q62159"/>
<dbReference type="OMA" id="KNGFIMF"/>
<dbReference type="OrthoDB" id="8830751at2759"/>
<dbReference type="PhylomeDB" id="Q62159"/>
<dbReference type="TreeFam" id="TF300837"/>
<dbReference type="Reactome" id="R-MMU-416482">
    <property type="pathway name" value="G alpha (12/13) signalling events"/>
</dbReference>
<dbReference type="Reactome" id="R-MMU-416572">
    <property type="pathway name" value="Sema4D induced cell migration and growth-cone collapse"/>
</dbReference>
<dbReference type="Reactome" id="R-MMU-5625740">
    <property type="pathway name" value="RHO GTPases activate PKNs"/>
</dbReference>
<dbReference type="Reactome" id="R-MMU-5625900">
    <property type="pathway name" value="RHO GTPases activate CIT"/>
</dbReference>
<dbReference type="Reactome" id="R-MMU-5627117">
    <property type="pathway name" value="RHO GTPases Activate ROCKs"/>
</dbReference>
<dbReference type="Reactome" id="R-MMU-5663220">
    <property type="pathway name" value="RHO GTPases Activate Formins"/>
</dbReference>
<dbReference type="Reactome" id="R-MMU-9013106">
    <property type="pathway name" value="RHOC GTPase cycle"/>
</dbReference>
<dbReference type="BioGRID-ORCS" id="11853">
    <property type="hits" value="3 hits in 79 CRISPR screens"/>
</dbReference>
<dbReference type="CD-CODE" id="01CA17F3">
    <property type="entry name" value="Centrosome"/>
</dbReference>
<dbReference type="PRO" id="PR:Q62159"/>
<dbReference type="Proteomes" id="UP000000589">
    <property type="component" value="Chromosome 3"/>
</dbReference>
<dbReference type="RNAct" id="Q62159">
    <property type="molecule type" value="protein"/>
</dbReference>
<dbReference type="Bgee" id="ENSMUSG00000002233">
    <property type="expression patterns" value="Expressed in decidua and 252 other cell types or tissues"/>
</dbReference>
<dbReference type="ExpressionAtlas" id="Q62159">
    <property type="expression patterns" value="baseline and differential"/>
</dbReference>
<dbReference type="GO" id="GO:0032154">
    <property type="term" value="C:cleavage furrow"/>
    <property type="evidence" value="ECO:0000250"/>
    <property type="project" value="UniProtKB"/>
</dbReference>
<dbReference type="GO" id="GO:0005634">
    <property type="term" value="C:nucleus"/>
    <property type="evidence" value="ECO:0000314"/>
    <property type="project" value="MGI"/>
</dbReference>
<dbReference type="GO" id="GO:0005886">
    <property type="term" value="C:plasma membrane"/>
    <property type="evidence" value="ECO:0000314"/>
    <property type="project" value="MGI"/>
</dbReference>
<dbReference type="GO" id="GO:0032420">
    <property type="term" value="C:stereocilium"/>
    <property type="evidence" value="ECO:0000314"/>
    <property type="project" value="UniProtKB"/>
</dbReference>
<dbReference type="GO" id="GO:0005525">
    <property type="term" value="F:GTP binding"/>
    <property type="evidence" value="ECO:0007669"/>
    <property type="project" value="UniProtKB-KW"/>
</dbReference>
<dbReference type="GO" id="GO:0003924">
    <property type="term" value="F:GTPase activity"/>
    <property type="evidence" value="ECO:0007669"/>
    <property type="project" value="InterPro"/>
</dbReference>
<dbReference type="GO" id="GO:0043297">
    <property type="term" value="P:apical junction assembly"/>
    <property type="evidence" value="ECO:0000314"/>
    <property type="project" value="UniProtKB"/>
</dbReference>
<dbReference type="GO" id="GO:0000281">
    <property type="term" value="P:mitotic cytokinesis"/>
    <property type="evidence" value="ECO:0000250"/>
    <property type="project" value="UniProtKB"/>
</dbReference>
<dbReference type="GO" id="GO:0030335">
    <property type="term" value="P:positive regulation of cell migration"/>
    <property type="evidence" value="ECO:0007669"/>
    <property type="project" value="Ensembl"/>
</dbReference>
<dbReference type="GO" id="GO:0031334">
    <property type="term" value="P:positive regulation of protein-containing complex assembly"/>
    <property type="evidence" value="ECO:0000315"/>
    <property type="project" value="UniProtKB"/>
</dbReference>
<dbReference type="GO" id="GO:0051496">
    <property type="term" value="P:positive regulation of stress fiber assembly"/>
    <property type="evidence" value="ECO:0007669"/>
    <property type="project" value="Ensembl"/>
</dbReference>
<dbReference type="GO" id="GO:1902766">
    <property type="term" value="P:skeletal muscle satellite cell migration"/>
    <property type="evidence" value="ECO:0000250"/>
    <property type="project" value="AgBase"/>
</dbReference>
<dbReference type="GO" id="GO:0007264">
    <property type="term" value="P:small GTPase-mediated signal transduction"/>
    <property type="evidence" value="ECO:0007669"/>
    <property type="project" value="InterPro"/>
</dbReference>
<dbReference type="GO" id="GO:0044319">
    <property type="term" value="P:wound healing, spreading of cells"/>
    <property type="evidence" value="ECO:0000250"/>
    <property type="project" value="AgBase"/>
</dbReference>
<dbReference type="CDD" id="cd01870">
    <property type="entry name" value="RhoA_like"/>
    <property type="match status" value="1"/>
</dbReference>
<dbReference type="FunFam" id="3.40.50.300:FF:000095">
    <property type="entry name" value="Rho-related GTP-binding protein RhoC"/>
    <property type="match status" value="1"/>
</dbReference>
<dbReference type="Gene3D" id="3.40.50.300">
    <property type="entry name" value="P-loop containing nucleotide triphosphate hydrolases"/>
    <property type="match status" value="1"/>
</dbReference>
<dbReference type="InterPro" id="IPR027417">
    <property type="entry name" value="P-loop_NTPase"/>
</dbReference>
<dbReference type="InterPro" id="IPR005225">
    <property type="entry name" value="Small_GTP-bd"/>
</dbReference>
<dbReference type="InterPro" id="IPR001806">
    <property type="entry name" value="Small_GTPase"/>
</dbReference>
<dbReference type="InterPro" id="IPR003578">
    <property type="entry name" value="Small_GTPase_Rho"/>
</dbReference>
<dbReference type="NCBIfam" id="TIGR00231">
    <property type="entry name" value="small_GTP"/>
    <property type="match status" value="1"/>
</dbReference>
<dbReference type="PANTHER" id="PTHR24072">
    <property type="entry name" value="RHO FAMILY GTPASE"/>
    <property type="match status" value="1"/>
</dbReference>
<dbReference type="Pfam" id="PF00071">
    <property type="entry name" value="Ras"/>
    <property type="match status" value="1"/>
</dbReference>
<dbReference type="PRINTS" id="PR00449">
    <property type="entry name" value="RASTRNSFRMNG"/>
</dbReference>
<dbReference type="SMART" id="SM00175">
    <property type="entry name" value="RAB"/>
    <property type="match status" value="1"/>
</dbReference>
<dbReference type="SMART" id="SM00173">
    <property type="entry name" value="RAS"/>
    <property type="match status" value="1"/>
</dbReference>
<dbReference type="SMART" id="SM00174">
    <property type="entry name" value="RHO"/>
    <property type="match status" value="1"/>
</dbReference>
<dbReference type="SUPFAM" id="SSF52540">
    <property type="entry name" value="P-loop containing nucleoside triphosphate hydrolases"/>
    <property type="match status" value="1"/>
</dbReference>
<dbReference type="PROSITE" id="PS51420">
    <property type="entry name" value="RHO"/>
    <property type="match status" value="1"/>
</dbReference>
<organism>
    <name type="scientific">Mus musculus</name>
    <name type="common">Mouse</name>
    <dbReference type="NCBI Taxonomy" id="10090"/>
    <lineage>
        <taxon>Eukaryota</taxon>
        <taxon>Metazoa</taxon>
        <taxon>Chordata</taxon>
        <taxon>Craniata</taxon>
        <taxon>Vertebrata</taxon>
        <taxon>Euteleostomi</taxon>
        <taxon>Mammalia</taxon>
        <taxon>Eutheria</taxon>
        <taxon>Euarchontoglires</taxon>
        <taxon>Glires</taxon>
        <taxon>Rodentia</taxon>
        <taxon>Myomorpha</taxon>
        <taxon>Muroidea</taxon>
        <taxon>Muridae</taxon>
        <taxon>Murinae</taxon>
        <taxon>Mus</taxon>
        <taxon>Mus</taxon>
    </lineage>
</organism>
<sequence>MAAIRKKLVIVGDGACGKTCLLIVFSKDQFPEVYVPTVFENYIADIEVDGKQVELALWDTAGQEDYDRLRPLSYPDTDVILMCFSIDSPDSLENIPEKWTPEVKHFCPNVPIILVGNKKDLRQDEHTRRELAKMKQEPVRSEEGRDMANRISAFGYLECSAKTKEGVREVFEMATRAGLQVRKNKRRRGCPIL</sequence>
<evidence type="ECO:0000250" key="1"/>
<evidence type="ECO:0000250" key="2">
    <source>
        <dbReference type="UniProtKB" id="P08134"/>
    </source>
</evidence>
<evidence type="ECO:0000255" key="3"/>
<evidence type="ECO:0000269" key="4">
    <source>
    </source>
</evidence>
<evidence type="ECO:0000269" key="5">
    <source>
    </source>
</evidence>
<evidence type="ECO:0000269" key="6">
    <source>
    </source>
</evidence>
<evidence type="ECO:0000305" key="7"/>